<accession>Q8PJ30</accession>
<dbReference type="EC" id="2.1.3.15" evidence="1"/>
<dbReference type="EMBL" id="AE008923">
    <property type="protein sequence ID" value="AAM37560.1"/>
    <property type="molecule type" value="Genomic_DNA"/>
</dbReference>
<dbReference type="RefSeq" id="WP_011051781.1">
    <property type="nucleotide sequence ID" value="NC_003919.1"/>
</dbReference>
<dbReference type="SMR" id="Q8PJ30"/>
<dbReference type="GeneID" id="66911804"/>
<dbReference type="KEGG" id="xac:XAC2715"/>
<dbReference type="eggNOG" id="COG0777">
    <property type="taxonomic scope" value="Bacteria"/>
</dbReference>
<dbReference type="HOGENOM" id="CLU_015486_1_0_6"/>
<dbReference type="UniPathway" id="UPA00655">
    <property type="reaction ID" value="UER00711"/>
</dbReference>
<dbReference type="Proteomes" id="UP000000576">
    <property type="component" value="Chromosome"/>
</dbReference>
<dbReference type="GO" id="GO:0009329">
    <property type="term" value="C:acetate CoA-transferase complex"/>
    <property type="evidence" value="ECO:0007669"/>
    <property type="project" value="TreeGrafter"/>
</dbReference>
<dbReference type="GO" id="GO:0003989">
    <property type="term" value="F:acetyl-CoA carboxylase activity"/>
    <property type="evidence" value="ECO:0007669"/>
    <property type="project" value="InterPro"/>
</dbReference>
<dbReference type="GO" id="GO:0005524">
    <property type="term" value="F:ATP binding"/>
    <property type="evidence" value="ECO:0007669"/>
    <property type="project" value="UniProtKB-KW"/>
</dbReference>
<dbReference type="GO" id="GO:0016743">
    <property type="term" value="F:carboxyl- or carbamoyltransferase activity"/>
    <property type="evidence" value="ECO:0007669"/>
    <property type="project" value="UniProtKB-UniRule"/>
</dbReference>
<dbReference type="GO" id="GO:0008270">
    <property type="term" value="F:zinc ion binding"/>
    <property type="evidence" value="ECO:0007669"/>
    <property type="project" value="UniProtKB-UniRule"/>
</dbReference>
<dbReference type="GO" id="GO:0006633">
    <property type="term" value="P:fatty acid biosynthetic process"/>
    <property type="evidence" value="ECO:0007669"/>
    <property type="project" value="UniProtKB-KW"/>
</dbReference>
<dbReference type="GO" id="GO:2001295">
    <property type="term" value="P:malonyl-CoA biosynthetic process"/>
    <property type="evidence" value="ECO:0007669"/>
    <property type="project" value="UniProtKB-UniRule"/>
</dbReference>
<dbReference type="Gene3D" id="3.90.226.10">
    <property type="entry name" value="2-enoyl-CoA Hydratase, Chain A, domain 1"/>
    <property type="match status" value="1"/>
</dbReference>
<dbReference type="HAMAP" id="MF_01395">
    <property type="entry name" value="AcetylCoA_CT_beta"/>
    <property type="match status" value="1"/>
</dbReference>
<dbReference type="InterPro" id="IPR034733">
    <property type="entry name" value="AcCoA_carboxyl_beta"/>
</dbReference>
<dbReference type="InterPro" id="IPR000438">
    <property type="entry name" value="Acetyl_CoA_COase_Trfase_b_su"/>
</dbReference>
<dbReference type="InterPro" id="IPR029045">
    <property type="entry name" value="ClpP/crotonase-like_dom_sf"/>
</dbReference>
<dbReference type="InterPro" id="IPR011762">
    <property type="entry name" value="COA_CT_N"/>
</dbReference>
<dbReference type="InterPro" id="IPR041010">
    <property type="entry name" value="Znf-ACC"/>
</dbReference>
<dbReference type="NCBIfam" id="TIGR00515">
    <property type="entry name" value="accD"/>
    <property type="match status" value="1"/>
</dbReference>
<dbReference type="PANTHER" id="PTHR42995">
    <property type="entry name" value="ACETYL-COENZYME A CARBOXYLASE CARBOXYL TRANSFERASE SUBUNIT BETA, CHLOROPLASTIC"/>
    <property type="match status" value="1"/>
</dbReference>
<dbReference type="PANTHER" id="PTHR42995:SF5">
    <property type="entry name" value="ACETYL-COENZYME A CARBOXYLASE CARBOXYL TRANSFERASE SUBUNIT BETA, CHLOROPLASTIC"/>
    <property type="match status" value="1"/>
</dbReference>
<dbReference type="Pfam" id="PF01039">
    <property type="entry name" value="Carboxyl_trans"/>
    <property type="match status" value="1"/>
</dbReference>
<dbReference type="Pfam" id="PF17848">
    <property type="entry name" value="Zn_ribbon_ACC"/>
    <property type="match status" value="1"/>
</dbReference>
<dbReference type="PRINTS" id="PR01070">
    <property type="entry name" value="ACCCTRFRASEB"/>
</dbReference>
<dbReference type="SUPFAM" id="SSF52096">
    <property type="entry name" value="ClpP/crotonase"/>
    <property type="match status" value="1"/>
</dbReference>
<dbReference type="PROSITE" id="PS50980">
    <property type="entry name" value="COA_CT_NTER"/>
    <property type="match status" value="1"/>
</dbReference>
<proteinExistence type="inferred from homology"/>
<gene>
    <name evidence="1" type="primary">accD</name>
    <name type="ordered locus">XAC2715</name>
</gene>
<evidence type="ECO:0000255" key="1">
    <source>
        <dbReference type="HAMAP-Rule" id="MF_01395"/>
    </source>
</evidence>
<evidence type="ECO:0000255" key="2">
    <source>
        <dbReference type="PROSITE-ProRule" id="PRU01136"/>
    </source>
</evidence>
<evidence type="ECO:0000256" key="3">
    <source>
        <dbReference type="SAM" id="MobiDB-lite"/>
    </source>
</evidence>
<feature type="chain" id="PRO_0000359095" description="Acetyl-coenzyme A carboxylase carboxyl transferase subunit beta">
    <location>
        <begin position="1"/>
        <end position="295"/>
    </location>
</feature>
<feature type="domain" description="CoA carboxyltransferase N-terminal" evidence="2">
    <location>
        <begin position="28"/>
        <end position="295"/>
    </location>
</feature>
<feature type="zinc finger region" description="C4-type" evidence="1">
    <location>
        <begin position="32"/>
        <end position="54"/>
    </location>
</feature>
<feature type="region of interest" description="Disordered" evidence="3">
    <location>
        <begin position="1"/>
        <end position="20"/>
    </location>
</feature>
<feature type="binding site" evidence="1">
    <location>
        <position position="32"/>
    </location>
    <ligand>
        <name>Zn(2+)</name>
        <dbReference type="ChEBI" id="CHEBI:29105"/>
    </ligand>
</feature>
<feature type="binding site" evidence="1">
    <location>
        <position position="35"/>
    </location>
    <ligand>
        <name>Zn(2+)</name>
        <dbReference type="ChEBI" id="CHEBI:29105"/>
    </ligand>
</feature>
<feature type="binding site" evidence="1">
    <location>
        <position position="51"/>
    </location>
    <ligand>
        <name>Zn(2+)</name>
        <dbReference type="ChEBI" id="CHEBI:29105"/>
    </ligand>
</feature>
<feature type="binding site" evidence="1">
    <location>
        <position position="54"/>
    </location>
    <ligand>
        <name>Zn(2+)</name>
        <dbReference type="ChEBI" id="CHEBI:29105"/>
    </ligand>
</feature>
<sequence>MSWLSKLMPSGIRTENTPAKKRSVPEGLWEKCSNCGSALYGPELEENLEVCPKCDHHMAIRARARLNSLFDPDTATTEIAAQLGPVDALKFKDQKRYGERIKASQKASGEYDALIAMRGTLKGNPLVAAAFDFAFMGGSMGSVVGERFARAAEVALEVGCPFVCFSASGGARMQEGLFSLMQMAKTSAALGRLREAGLPYISVLTHPTTGGVSASFAMLGDINIAEPHALIGFAGPRVIEQTVRETLPEGFQRSEFLLDHGTIDQICDRRQMRDRIAELTAMMMRQPHPQDADAA</sequence>
<name>ACCD_XANAC</name>
<organism>
    <name type="scientific">Xanthomonas axonopodis pv. citri (strain 306)</name>
    <dbReference type="NCBI Taxonomy" id="190486"/>
    <lineage>
        <taxon>Bacteria</taxon>
        <taxon>Pseudomonadati</taxon>
        <taxon>Pseudomonadota</taxon>
        <taxon>Gammaproteobacteria</taxon>
        <taxon>Lysobacterales</taxon>
        <taxon>Lysobacteraceae</taxon>
        <taxon>Xanthomonas</taxon>
    </lineage>
</organism>
<reference key="1">
    <citation type="journal article" date="2002" name="Nature">
        <title>Comparison of the genomes of two Xanthomonas pathogens with differing host specificities.</title>
        <authorList>
            <person name="da Silva A.C.R."/>
            <person name="Ferro J.A."/>
            <person name="Reinach F.C."/>
            <person name="Farah C.S."/>
            <person name="Furlan L.R."/>
            <person name="Quaggio R.B."/>
            <person name="Monteiro-Vitorello C.B."/>
            <person name="Van Sluys M.A."/>
            <person name="Almeida N.F. Jr."/>
            <person name="Alves L.M.C."/>
            <person name="do Amaral A.M."/>
            <person name="Bertolini M.C."/>
            <person name="Camargo L.E.A."/>
            <person name="Camarotte G."/>
            <person name="Cannavan F."/>
            <person name="Cardozo J."/>
            <person name="Chambergo F."/>
            <person name="Ciapina L.P."/>
            <person name="Cicarelli R.M.B."/>
            <person name="Coutinho L.L."/>
            <person name="Cursino-Santos J.R."/>
            <person name="El-Dorry H."/>
            <person name="Faria J.B."/>
            <person name="Ferreira A.J.S."/>
            <person name="Ferreira R.C.C."/>
            <person name="Ferro M.I.T."/>
            <person name="Formighieri E.F."/>
            <person name="Franco M.C."/>
            <person name="Greggio C.C."/>
            <person name="Gruber A."/>
            <person name="Katsuyama A.M."/>
            <person name="Kishi L.T."/>
            <person name="Leite R.P."/>
            <person name="Lemos E.G.M."/>
            <person name="Lemos M.V.F."/>
            <person name="Locali E.C."/>
            <person name="Machado M.A."/>
            <person name="Madeira A.M.B.N."/>
            <person name="Martinez-Rossi N.M."/>
            <person name="Martins E.C."/>
            <person name="Meidanis J."/>
            <person name="Menck C.F.M."/>
            <person name="Miyaki C.Y."/>
            <person name="Moon D.H."/>
            <person name="Moreira L.M."/>
            <person name="Novo M.T.M."/>
            <person name="Okura V.K."/>
            <person name="Oliveira M.C."/>
            <person name="Oliveira V.R."/>
            <person name="Pereira H.A."/>
            <person name="Rossi A."/>
            <person name="Sena J.A.D."/>
            <person name="Silva C."/>
            <person name="de Souza R.F."/>
            <person name="Spinola L.A.F."/>
            <person name="Takita M.A."/>
            <person name="Tamura R.E."/>
            <person name="Teixeira E.C."/>
            <person name="Tezza R.I.D."/>
            <person name="Trindade dos Santos M."/>
            <person name="Truffi D."/>
            <person name="Tsai S.M."/>
            <person name="White F.F."/>
            <person name="Setubal J.C."/>
            <person name="Kitajima J.P."/>
        </authorList>
    </citation>
    <scope>NUCLEOTIDE SEQUENCE [LARGE SCALE GENOMIC DNA]</scope>
    <source>
        <strain>306</strain>
    </source>
</reference>
<comment type="function">
    <text evidence="1">Component of the acetyl coenzyme A carboxylase (ACC) complex. Biotin carboxylase (BC) catalyzes the carboxylation of biotin on its carrier protein (BCCP) and then the CO(2) group is transferred by the transcarboxylase to acetyl-CoA to form malonyl-CoA.</text>
</comment>
<comment type="catalytic activity">
    <reaction evidence="1">
        <text>N(6)-carboxybiotinyl-L-lysyl-[protein] + acetyl-CoA = N(6)-biotinyl-L-lysyl-[protein] + malonyl-CoA</text>
        <dbReference type="Rhea" id="RHEA:54728"/>
        <dbReference type="Rhea" id="RHEA-COMP:10505"/>
        <dbReference type="Rhea" id="RHEA-COMP:10506"/>
        <dbReference type="ChEBI" id="CHEBI:57288"/>
        <dbReference type="ChEBI" id="CHEBI:57384"/>
        <dbReference type="ChEBI" id="CHEBI:83144"/>
        <dbReference type="ChEBI" id="CHEBI:83145"/>
        <dbReference type="EC" id="2.1.3.15"/>
    </reaction>
</comment>
<comment type="cofactor">
    <cofactor evidence="1">
        <name>Zn(2+)</name>
        <dbReference type="ChEBI" id="CHEBI:29105"/>
    </cofactor>
    <text evidence="1">Binds 1 zinc ion per subunit.</text>
</comment>
<comment type="pathway">
    <text evidence="1">Lipid metabolism; malonyl-CoA biosynthesis; malonyl-CoA from acetyl-CoA: step 1/1.</text>
</comment>
<comment type="subunit">
    <text evidence="1">Acetyl-CoA carboxylase is a heterohexamer composed of biotin carboxyl carrier protein (AccB), biotin carboxylase (AccC) and two subunits each of ACCase subunit alpha (AccA) and ACCase subunit beta (AccD).</text>
</comment>
<comment type="subcellular location">
    <subcellularLocation>
        <location evidence="1">Cytoplasm</location>
    </subcellularLocation>
</comment>
<comment type="similarity">
    <text evidence="1">Belongs to the AccD/PCCB family.</text>
</comment>
<protein>
    <recommendedName>
        <fullName evidence="1">Acetyl-coenzyme A carboxylase carboxyl transferase subunit beta</fullName>
        <shortName evidence="1">ACCase subunit beta</shortName>
        <shortName evidence="1">Acetyl-CoA carboxylase carboxyltransferase subunit beta</shortName>
        <ecNumber evidence="1">2.1.3.15</ecNumber>
    </recommendedName>
</protein>
<keyword id="KW-0067">ATP-binding</keyword>
<keyword id="KW-0963">Cytoplasm</keyword>
<keyword id="KW-0275">Fatty acid biosynthesis</keyword>
<keyword id="KW-0276">Fatty acid metabolism</keyword>
<keyword id="KW-0444">Lipid biosynthesis</keyword>
<keyword id="KW-0443">Lipid metabolism</keyword>
<keyword id="KW-0479">Metal-binding</keyword>
<keyword id="KW-0547">Nucleotide-binding</keyword>
<keyword id="KW-0808">Transferase</keyword>
<keyword id="KW-0862">Zinc</keyword>
<keyword id="KW-0863">Zinc-finger</keyword>